<accession>A0M0D8</accession>
<gene>
    <name evidence="1" type="primary">rpsR</name>
    <name type="ordered locus">GFO_1109</name>
</gene>
<evidence type="ECO:0000255" key="1">
    <source>
        <dbReference type="HAMAP-Rule" id="MF_00270"/>
    </source>
</evidence>
<evidence type="ECO:0000305" key="2"/>
<organism>
    <name type="scientific">Christiangramia forsetii (strain DSM 17595 / CGMCC 1.15422 / KT0803)</name>
    <name type="common">Gramella forsetii</name>
    <dbReference type="NCBI Taxonomy" id="411154"/>
    <lineage>
        <taxon>Bacteria</taxon>
        <taxon>Pseudomonadati</taxon>
        <taxon>Bacteroidota</taxon>
        <taxon>Flavobacteriia</taxon>
        <taxon>Flavobacteriales</taxon>
        <taxon>Flavobacteriaceae</taxon>
        <taxon>Christiangramia</taxon>
    </lineage>
</organism>
<dbReference type="EMBL" id="CU207366">
    <property type="protein sequence ID" value="CAL66083.1"/>
    <property type="molecule type" value="Genomic_DNA"/>
</dbReference>
<dbReference type="RefSeq" id="WP_011709002.1">
    <property type="nucleotide sequence ID" value="NC_008571.1"/>
</dbReference>
<dbReference type="SMR" id="A0M0D8"/>
<dbReference type="STRING" id="411154.GFO_1109"/>
<dbReference type="KEGG" id="gfo:GFO_1109"/>
<dbReference type="eggNOG" id="COG0238">
    <property type="taxonomic scope" value="Bacteria"/>
</dbReference>
<dbReference type="HOGENOM" id="CLU_148710_2_0_10"/>
<dbReference type="OrthoDB" id="9812008at2"/>
<dbReference type="Proteomes" id="UP000000755">
    <property type="component" value="Chromosome"/>
</dbReference>
<dbReference type="GO" id="GO:0022627">
    <property type="term" value="C:cytosolic small ribosomal subunit"/>
    <property type="evidence" value="ECO:0007669"/>
    <property type="project" value="TreeGrafter"/>
</dbReference>
<dbReference type="GO" id="GO:0070181">
    <property type="term" value="F:small ribosomal subunit rRNA binding"/>
    <property type="evidence" value="ECO:0007669"/>
    <property type="project" value="TreeGrafter"/>
</dbReference>
<dbReference type="GO" id="GO:0003735">
    <property type="term" value="F:structural constituent of ribosome"/>
    <property type="evidence" value="ECO:0007669"/>
    <property type="project" value="InterPro"/>
</dbReference>
<dbReference type="GO" id="GO:0006412">
    <property type="term" value="P:translation"/>
    <property type="evidence" value="ECO:0007669"/>
    <property type="project" value="UniProtKB-UniRule"/>
</dbReference>
<dbReference type="FunFam" id="4.10.640.10:FF:000004">
    <property type="entry name" value="30S ribosomal protein S18"/>
    <property type="match status" value="1"/>
</dbReference>
<dbReference type="Gene3D" id="4.10.640.10">
    <property type="entry name" value="Ribosomal protein S18"/>
    <property type="match status" value="1"/>
</dbReference>
<dbReference type="HAMAP" id="MF_00270">
    <property type="entry name" value="Ribosomal_bS18"/>
    <property type="match status" value="1"/>
</dbReference>
<dbReference type="InterPro" id="IPR001648">
    <property type="entry name" value="Ribosomal_bS18"/>
</dbReference>
<dbReference type="InterPro" id="IPR018275">
    <property type="entry name" value="Ribosomal_bS18_CS"/>
</dbReference>
<dbReference type="InterPro" id="IPR036870">
    <property type="entry name" value="Ribosomal_bS18_sf"/>
</dbReference>
<dbReference type="NCBIfam" id="TIGR00165">
    <property type="entry name" value="S18"/>
    <property type="match status" value="1"/>
</dbReference>
<dbReference type="PANTHER" id="PTHR13479">
    <property type="entry name" value="30S RIBOSOMAL PROTEIN S18"/>
    <property type="match status" value="1"/>
</dbReference>
<dbReference type="PANTHER" id="PTHR13479:SF40">
    <property type="entry name" value="SMALL RIBOSOMAL SUBUNIT PROTEIN BS18M"/>
    <property type="match status" value="1"/>
</dbReference>
<dbReference type="Pfam" id="PF01084">
    <property type="entry name" value="Ribosomal_S18"/>
    <property type="match status" value="1"/>
</dbReference>
<dbReference type="PRINTS" id="PR00974">
    <property type="entry name" value="RIBOSOMALS18"/>
</dbReference>
<dbReference type="SUPFAM" id="SSF46911">
    <property type="entry name" value="Ribosomal protein S18"/>
    <property type="match status" value="1"/>
</dbReference>
<dbReference type="PROSITE" id="PS00057">
    <property type="entry name" value="RIBOSOMAL_S18"/>
    <property type="match status" value="1"/>
</dbReference>
<reference key="1">
    <citation type="journal article" date="2006" name="Environ. Microbiol.">
        <title>Whole genome analysis of the marine Bacteroidetes'Gramella forsetii' reveals adaptations to degradation of polymeric organic matter.</title>
        <authorList>
            <person name="Bauer M."/>
            <person name="Kube M."/>
            <person name="Teeling H."/>
            <person name="Richter M."/>
            <person name="Lombardot T."/>
            <person name="Allers E."/>
            <person name="Wuerdemann C.A."/>
            <person name="Quast C."/>
            <person name="Kuhl H."/>
            <person name="Knaust F."/>
            <person name="Woebken D."/>
            <person name="Bischof K."/>
            <person name="Mussmann M."/>
            <person name="Choudhuri J.V."/>
            <person name="Meyer F."/>
            <person name="Reinhardt R."/>
            <person name="Amann R.I."/>
            <person name="Gloeckner F.O."/>
        </authorList>
    </citation>
    <scope>NUCLEOTIDE SEQUENCE [LARGE SCALE GENOMIC DNA]</scope>
    <source>
        <strain>DSM 17595 / CGMCC 1.15422 / KT0803</strain>
    </source>
</reference>
<feature type="chain" id="PRO_0000345481" description="Small ribosomal subunit protein bS18">
    <location>
        <begin position="1"/>
        <end position="99"/>
    </location>
</feature>
<protein>
    <recommendedName>
        <fullName evidence="1">Small ribosomal subunit protein bS18</fullName>
    </recommendedName>
    <alternativeName>
        <fullName evidence="2">30S ribosomal protein S18</fullName>
    </alternativeName>
</protein>
<keyword id="KW-0687">Ribonucleoprotein</keyword>
<keyword id="KW-0689">Ribosomal protein</keyword>
<keyword id="KW-0694">RNA-binding</keyword>
<keyword id="KW-0699">rRNA-binding</keyword>
<sequence length="99" mass="11394">MATSIEQQAKGKKDGEIRYLTPLNIETTKAKKYCRFKRSGIKYIDYKDPDFLMGFVNEQGKLLPRRLTGTSLKFQRKVATAVKRARHLALMPYVGDLLK</sequence>
<proteinExistence type="inferred from homology"/>
<comment type="function">
    <text evidence="1">Binds as a heterodimer with protein bS6 to the central domain of the 16S rRNA, where it helps stabilize the platform of the 30S subunit.</text>
</comment>
<comment type="subunit">
    <text evidence="1">Part of the 30S ribosomal subunit. Forms a tight heterodimer with protein bS6.</text>
</comment>
<comment type="similarity">
    <text evidence="1">Belongs to the bacterial ribosomal protein bS18 family.</text>
</comment>
<name>RS18_CHRFK</name>